<protein>
    <recommendedName>
        <fullName evidence="1">Probable transcriptional regulatory protein JTY_2622</fullName>
    </recommendedName>
</protein>
<proteinExistence type="inferred from homology"/>
<feature type="chain" id="PRO_1000200102" description="Probable transcriptional regulatory protein JTY_2622">
    <location>
        <begin position="1"/>
        <end position="251"/>
    </location>
</feature>
<reference key="1">
    <citation type="journal article" date="2009" name="Vaccine">
        <title>Whole genome sequence analysis of Mycobacterium bovis bacillus Calmette-Guerin (BCG) Tokyo 172: a comparative study of BCG vaccine substrains.</title>
        <authorList>
            <person name="Seki M."/>
            <person name="Honda I."/>
            <person name="Fujita I."/>
            <person name="Yano I."/>
            <person name="Yamamoto S."/>
            <person name="Koyama A."/>
        </authorList>
    </citation>
    <scope>NUCLEOTIDE SEQUENCE [LARGE SCALE GENOMIC DNA]</scope>
    <source>
        <strain>BCG / Tokyo 172 / ATCC 35737 / TMC 1019</strain>
    </source>
</reference>
<comment type="subcellular location">
    <subcellularLocation>
        <location evidence="1">Cytoplasm</location>
    </subcellularLocation>
</comment>
<comment type="similarity">
    <text evidence="1">Belongs to the TACO1 family.</text>
</comment>
<keyword id="KW-0963">Cytoplasm</keyword>
<keyword id="KW-0238">DNA-binding</keyword>
<keyword id="KW-0804">Transcription</keyword>
<keyword id="KW-0805">Transcription regulation</keyword>
<evidence type="ECO:0000255" key="1">
    <source>
        <dbReference type="HAMAP-Rule" id="MF_00693"/>
    </source>
</evidence>
<accession>C1AF74</accession>
<organism>
    <name type="scientific">Mycobacterium bovis (strain BCG / Tokyo 172 / ATCC 35737 / TMC 1019)</name>
    <dbReference type="NCBI Taxonomy" id="561275"/>
    <lineage>
        <taxon>Bacteria</taxon>
        <taxon>Bacillati</taxon>
        <taxon>Actinomycetota</taxon>
        <taxon>Actinomycetes</taxon>
        <taxon>Mycobacteriales</taxon>
        <taxon>Mycobacteriaceae</taxon>
        <taxon>Mycobacterium</taxon>
        <taxon>Mycobacterium tuberculosis complex</taxon>
    </lineage>
</organism>
<dbReference type="EMBL" id="AP010918">
    <property type="protein sequence ID" value="BAH26903.1"/>
    <property type="molecule type" value="Genomic_DNA"/>
</dbReference>
<dbReference type="RefSeq" id="WP_003413464.1">
    <property type="nucleotide sequence ID" value="NZ_CP014566.1"/>
</dbReference>
<dbReference type="SMR" id="C1AF74"/>
<dbReference type="KEGG" id="mbt:JTY_2622"/>
<dbReference type="HOGENOM" id="CLU_062974_2_2_11"/>
<dbReference type="GO" id="GO:0005829">
    <property type="term" value="C:cytosol"/>
    <property type="evidence" value="ECO:0007669"/>
    <property type="project" value="TreeGrafter"/>
</dbReference>
<dbReference type="GO" id="GO:0003677">
    <property type="term" value="F:DNA binding"/>
    <property type="evidence" value="ECO:0007669"/>
    <property type="project" value="UniProtKB-UniRule"/>
</dbReference>
<dbReference type="GO" id="GO:0006355">
    <property type="term" value="P:regulation of DNA-templated transcription"/>
    <property type="evidence" value="ECO:0007669"/>
    <property type="project" value="UniProtKB-UniRule"/>
</dbReference>
<dbReference type="FunFam" id="1.10.10.200:FF:000002">
    <property type="entry name" value="Probable transcriptional regulatory protein CLM62_37755"/>
    <property type="match status" value="1"/>
</dbReference>
<dbReference type="FunFam" id="3.30.70.980:FF:000006">
    <property type="entry name" value="Probable transcriptional regulatory protein J113_18170"/>
    <property type="match status" value="1"/>
</dbReference>
<dbReference type="Gene3D" id="1.10.10.200">
    <property type="match status" value="1"/>
</dbReference>
<dbReference type="Gene3D" id="3.30.70.980">
    <property type="match status" value="2"/>
</dbReference>
<dbReference type="HAMAP" id="MF_00693">
    <property type="entry name" value="Transcrip_reg_TACO1"/>
    <property type="match status" value="1"/>
</dbReference>
<dbReference type="InterPro" id="IPR017856">
    <property type="entry name" value="Integrase-like_N"/>
</dbReference>
<dbReference type="InterPro" id="IPR048300">
    <property type="entry name" value="TACO1_YebC-like_2nd/3rd_dom"/>
</dbReference>
<dbReference type="InterPro" id="IPR049083">
    <property type="entry name" value="TACO1_YebC_N"/>
</dbReference>
<dbReference type="InterPro" id="IPR002876">
    <property type="entry name" value="Transcrip_reg_TACO1-like"/>
</dbReference>
<dbReference type="InterPro" id="IPR026564">
    <property type="entry name" value="Transcrip_reg_TACO1-like_dom3"/>
</dbReference>
<dbReference type="InterPro" id="IPR029072">
    <property type="entry name" value="YebC-like"/>
</dbReference>
<dbReference type="NCBIfam" id="NF001030">
    <property type="entry name" value="PRK00110.1"/>
    <property type="match status" value="1"/>
</dbReference>
<dbReference type="NCBIfam" id="NF009044">
    <property type="entry name" value="PRK12378.1"/>
    <property type="match status" value="1"/>
</dbReference>
<dbReference type="NCBIfam" id="TIGR01033">
    <property type="entry name" value="YebC/PmpR family DNA-binding transcriptional regulator"/>
    <property type="match status" value="1"/>
</dbReference>
<dbReference type="PANTHER" id="PTHR12532:SF6">
    <property type="entry name" value="TRANSCRIPTIONAL REGULATORY PROTEIN YEBC-RELATED"/>
    <property type="match status" value="1"/>
</dbReference>
<dbReference type="PANTHER" id="PTHR12532">
    <property type="entry name" value="TRANSLATIONAL ACTIVATOR OF CYTOCHROME C OXIDASE 1"/>
    <property type="match status" value="1"/>
</dbReference>
<dbReference type="Pfam" id="PF20772">
    <property type="entry name" value="TACO1_YebC_N"/>
    <property type="match status" value="1"/>
</dbReference>
<dbReference type="Pfam" id="PF01709">
    <property type="entry name" value="Transcrip_reg"/>
    <property type="match status" value="1"/>
</dbReference>
<dbReference type="SUPFAM" id="SSF75625">
    <property type="entry name" value="YebC-like"/>
    <property type="match status" value="1"/>
</dbReference>
<name>Y2622_MYCBT</name>
<sequence length="251" mass="26799">MSGHSKWATTKHKKAVVDARRGKMFARLIKNIEVAARVGGGDPAGNPTLYDAIQKAKKSSVPNENIERARKRGAGEEAGGADWQTIMYEGYAPNGVAVLIECLTDNRNRAASEVRVAMTRNGGTMADPGSVSYLFSRKGVVTLEKNGLTEDDVLAAVLEAGAEDVNDLGDSFEVISEPAELVAVRSALQDAGIDYESAEASFQPSVSVPVDLDGARKVFKLVDALEDSDDVQNVWTNVDVSDEVLAALDDE</sequence>
<gene>
    <name type="ordered locus">JTY_2622</name>
</gene>